<dbReference type="EMBL" id="CP001037">
    <property type="protein sequence ID" value="ACC84640.1"/>
    <property type="molecule type" value="Genomic_DNA"/>
</dbReference>
<dbReference type="STRING" id="63737.Npun_R6368"/>
<dbReference type="EnsemblBacteria" id="ACC84640">
    <property type="protein sequence ID" value="ACC84640"/>
    <property type="gene ID" value="Npun_R6368"/>
</dbReference>
<dbReference type="KEGG" id="npu:Npun_R6368"/>
<dbReference type="eggNOG" id="COG0759">
    <property type="taxonomic scope" value="Bacteria"/>
</dbReference>
<dbReference type="HOGENOM" id="CLU_144811_5_2_3"/>
<dbReference type="OrthoDB" id="9801753at2"/>
<dbReference type="PhylomeDB" id="B2IY41"/>
<dbReference type="Proteomes" id="UP000001191">
    <property type="component" value="Chromosome"/>
</dbReference>
<dbReference type="GO" id="GO:0005886">
    <property type="term" value="C:plasma membrane"/>
    <property type="evidence" value="ECO:0007669"/>
    <property type="project" value="UniProtKB-SubCell"/>
</dbReference>
<dbReference type="HAMAP" id="MF_00386">
    <property type="entry name" value="UPF0161_YidD"/>
    <property type="match status" value="1"/>
</dbReference>
<dbReference type="InterPro" id="IPR002696">
    <property type="entry name" value="Membr_insert_effic_factor_YidD"/>
</dbReference>
<dbReference type="NCBIfam" id="TIGR00278">
    <property type="entry name" value="membrane protein insertion efficiency factor YidD"/>
    <property type="match status" value="1"/>
</dbReference>
<dbReference type="PANTHER" id="PTHR33383">
    <property type="entry name" value="MEMBRANE PROTEIN INSERTION EFFICIENCY FACTOR-RELATED"/>
    <property type="match status" value="1"/>
</dbReference>
<dbReference type="PANTHER" id="PTHR33383:SF1">
    <property type="entry name" value="MEMBRANE PROTEIN INSERTION EFFICIENCY FACTOR-RELATED"/>
    <property type="match status" value="1"/>
</dbReference>
<dbReference type="Pfam" id="PF01809">
    <property type="entry name" value="YidD"/>
    <property type="match status" value="1"/>
</dbReference>
<dbReference type="SMART" id="SM01234">
    <property type="entry name" value="Haemolytic"/>
    <property type="match status" value="1"/>
</dbReference>
<sequence>MKLLFIWLIRGYRMFISPLFLPTCRFQPTCSMYAIEAIERFGVLRGSWMATRRILRCHPFHPGGYDPVPEVVEKVKEE</sequence>
<evidence type="ECO:0000255" key="1">
    <source>
        <dbReference type="HAMAP-Rule" id="MF_00386"/>
    </source>
</evidence>
<accession>B2IY41</accession>
<gene>
    <name type="ordered locus">Npun_R6368</name>
</gene>
<keyword id="KW-0997">Cell inner membrane</keyword>
<keyword id="KW-1003">Cell membrane</keyword>
<keyword id="KW-0472">Membrane</keyword>
<keyword id="KW-1185">Reference proteome</keyword>
<reference key="1">
    <citation type="journal article" date="2013" name="Plant Physiol.">
        <title>A Nostoc punctiforme Sugar Transporter Necessary to Establish a Cyanobacterium-Plant Symbiosis.</title>
        <authorList>
            <person name="Ekman M."/>
            <person name="Picossi S."/>
            <person name="Campbell E.L."/>
            <person name="Meeks J.C."/>
            <person name="Flores E."/>
        </authorList>
    </citation>
    <scope>NUCLEOTIDE SEQUENCE [LARGE SCALE GENOMIC DNA]</scope>
    <source>
        <strain>ATCC 29133 / PCC 73102</strain>
    </source>
</reference>
<organism>
    <name type="scientific">Nostoc punctiforme (strain ATCC 29133 / PCC 73102)</name>
    <dbReference type="NCBI Taxonomy" id="63737"/>
    <lineage>
        <taxon>Bacteria</taxon>
        <taxon>Bacillati</taxon>
        <taxon>Cyanobacteriota</taxon>
        <taxon>Cyanophyceae</taxon>
        <taxon>Nostocales</taxon>
        <taxon>Nostocaceae</taxon>
        <taxon>Nostoc</taxon>
    </lineage>
</organism>
<name>YIDD_NOSP7</name>
<protein>
    <recommendedName>
        <fullName evidence="1">Putative membrane protein insertion efficiency factor</fullName>
    </recommendedName>
</protein>
<feature type="chain" id="PRO_1000197767" description="Putative membrane protein insertion efficiency factor">
    <location>
        <begin position="1"/>
        <end position="78"/>
    </location>
</feature>
<comment type="function">
    <text evidence="1">Could be involved in insertion of integral membrane proteins into the membrane.</text>
</comment>
<comment type="subcellular location">
    <subcellularLocation>
        <location evidence="1">Cell inner membrane</location>
        <topology evidence="1">Peripheral membrane protein</topology>
        <orientation evidence="1">Cytoplasmic side</orientation>
    </subcellularLocation>
</comment>
<comment type="similarity">
    <text evidence="1">Belongs to the UPF0161 family.</text>
</comment>
<proteinExistence type="inferred from homology"/>